<protein>
    <recommendedName>
        <fullName>Protein FAM135B</fullName>
    </recommendedName>
</protein>
<dbReference type="EMBL" id="AB196635">
    <property type="protein sequence ID" value="BAE53437.1"/>
    <property type="molecule type" value="mRNA"/>
</dbReference>
<dbReference type="EMBL" id="AC068467">
    <property type="status" value="NOT_ANNOTATED_CDS"/>
    <property type="molecule type" value="Genomic_DNA"/>
</dbReference>
<dbReference type="EMBL" id="AC087711">
    <property type="status" value="NOT_ANNOTATED_CDS"/>
    <property type="molecule type" value="Genomic_DNA"/>
</dbReference>
<dbReference type="EMBL" id="AC103777">
    <property type="status" value="NOT_ANNOTATED_CDS"/>
    <property type="molecule type" value="Genomic_DNA"/>
</dbReference>
<dbReference type="EMBL" id="BC037288">
    <property type="protein sequence ID" value="AAH37288.1"/>
    <property type="molecule type" value="mRNA"/>
</dbReference>
<dbReference type="EMBL" id="BC106912">
    <property type="protein sequence ID" value="AAI06913.2"/>
    <property type="molecule type" value="mRNA"/>
</dbReference>
<dbReference type="EMBL" id="BC106913">
    <property type="protein sequence ID" value="AAI06914.2"/>
    <property type="molecule type" value="mRNA"/>
</dbReference>
<dbReference type="EMBL" id="AF131744">
    <property type="protein sequence ID" value="AAD20030.1"/>
    <property type="molecule type" value="mRNA"/>
</dbReference>
<dbReference type="EMBL" id="CR457147">
    <property type="protein sequence ID" value="CAG33428.1"/>
    <property type="molecule type" value="mRNA"/>
</dbReference>
<dbReference type="CCDS" id="CCDS6375.2">
    <molecule id="Q49AJ0-1"/>
</dbReference>
<dbReference type="RefSeq" id="NP_001349894.1">
    <molecule id="Q49AJ0-1"/>
    <property type="nucleotide sequence ID" value="NM_001362965.2"/>
</dbReference>
<dbReference type="RefSeq" id="NP_056996.2">
    <molecule id="Q49AJ0-1"/>
    <property type="nucleotide sequence ID" value="NM_015912.4"/>
</dbReference>
<dbReference type="RefSeq" id="XP_011515366.1">
    <property type="nucleotide sequence ID" value="XM_011517064.2"/>
</dbReference>
<dbReference type="RefSeq" id="XP_011515370.1">
    <property type="nucleotide sequence ID" value="XM_011517068.2"/>
</dbReference>
<dbReference type="RefSeq" id="XP_016868959.1">
    <property type="nucleotide sequence ID" value="XM_017013470.1"/>
</dbReference>
<dbReference type="RefSeq" id="XP_047277770.1">
    <molecule id="Q49AJ0-4"/>
    <property type="nucleotide sequence ID" value="XM_047421814.1"/>
</dbReference>
<dbReference type="BioGRID" id="119251">
    <property type="interactions" value="8"/>
</dbReference>
<dbReference type="FunCoup" id="Q49AJ0">
    <property type="interactions" value="318"/>
</dbReference>
<dbReference type="IntAct" id="Q49AJ0">
    <property type="interactions" value="18"/>
</dbReference>
<dbReference type="STRING" id="9606.ENSP00000378710"/>
<dbReference type="ESTHER" id="human-FAM135B">
    <property type="family name" value="Duf_676"/>
</dbReference>
<dbReference type="iPTMnet" id="Q49AJ0"/>
<dbReference type="PhosphoSitePlus" id="Q49AJ0"/>
<dbReference type="BioMuta" id="FAM135B"/>
<dbReference type="DMDM" id="166233528"/>
<dbReference type="jPOST" id="Q49AJ0"/>
<dbReference type="MassIVE" id="Q49AJ0"/>
<dbReference type="PaxDb" id="9606-ENSP00000378710"/>
<dbReference type="PeptideAtlas" id="Q49AJ0"/>
<dbReference type="ProteomicsDB" id="62048">
    <molecule id="Q49AJ0-1"/>
</dbReference>
<dbReference type="ProteomicsDB" id="62049">
    <molecule id="Q49AJ0-2"/>
</dbReference>
<dbReference type="ProteomicsDB" id="62050">
    <molecule id="Q49AJ0-3"/>
</dbReference>
<dbReference type="ProteomicsDB" id="62051">
    <molecule id="Q49AJ0-4"/>
</dbReference>
<dbReference type="Antibodypedia" id="14311">
    <property type="antibodies" value="108 antibodies from 17 providers"/>
</dbReference>
<dbReference type="DNASU" id="51059"/>
<dbReference type="Ensembl" id="ENST00000276737.10">
    <molecule id="Q49AJ0-3"/>
    <property type="protein sequence ID" value="ENSP00000276737.6"/>
    <property type="gene ID" value="ENSG00000147724.12"/>
</dbReference>
<dbReference type="Ensembl" id="ENST00000395297.6">
    <molecule id="Q49AJ0-1"/>
    <property type="protein sequence ID" value="ENSP00000378710.1"/>
    <property type="gene ID" value="ENSG00000147724.12"/>
</dbReference>
<dbReference type="GeneID" id="51059"/>
<dbReference type="KEGG" id="hsa:51059"/>
<dbReference type="MANE-Select" id="ENST00000395297.6">
    <property type="protein sequence ID" value="ENSP00000378710.1"/>
    <property type="RefSeq nucleotide sequence ID" value="NM_015912.4"/>
    <property type="RefSeq protein sequence ID" value="NP_056996.2"/>
</dbReference>
<dbReference type="UCSC" id="uc003yuy.3">
    <molecule id="Q49AJ0-1"/>
    <property type="organism name" value="human"/>
</dbReference>
<dbReference type="AGR" id="HGNC:28029"/>
<dbReference type="CTD" id="51059"/>
<dbReference type="DisGeNET" id="51059"/>
<dbReference type="GeneCards" id="FAM135B"/>
<dbReference type="HGNC" id="HGNC:28029">
    <property type="gene designation" value="FAM135B"/>
</dbReference>
<dbReference type="HPA" id="ENSG00000147724">
    <property type="expression patterns" value="Group enriched (adrenal gland, brain, retina, testis)"/>
</dbReference>
<dbReference type="neXtProt" id="NX_Q49AJ0"/>
<dbReference type="OpenTargets" id="ENSG00000147724"/>
<dbReference type="PharmGKB" id="PA162386277"/>
<dbReference type="VEuPathDB" id="HostDB:ENSG00000147724"/>
<dbReference type="eggNOG" id="KOG2205">
    <property type="taxonomic scope" value="Eukaryota"/>
</dbReference>
<dbReference type="GeneTree" id="ENSGT00940000156079"/>
<dbReference type="HOGENOM" id="CLU_003176_0_0_1"/>
<dbReference type="InParanoid" id="Q49AJ0"/>
<dbReference type="OMA" id="HFHPRKG"/>
<dbReference type="OrthoDB" id="273452at2759"/>
<dbReference type="PAN-GO" id="Q49AJ0">
    <property type="GO annotations" value="1 GO annotation based on evolutionary models"/>
</dbReference>
<dbReference type="PhylomeDB" id="Q49AJ0"/>
<dbReference type="TreeFam" id="TF314837"/>
<dbReference type="PathwayCommons" id="Q49AJ0"/>
<dbReference type="SignaLink" id="Q49AJ0"/>
<dbReference type="BioGRID-ORCS" id="51059">
    <property type="hits" value="7 hits in 1135 CRISPR screens"/>
</dbReference>
<dbReference type="ChiTaRS" id="FAM135B">
    <property type="organism name" value="human"/>
</dbReference>
<dbReference type="GeneWiki" id="FAM135B"/>
<dbReference type="GenomeRNAi" id="51059"/>
<dbReference type="Pharos" id="Q49AJ0">
    <property type="development level" value="Tbio"/>
</dbReference>
<dbReference type="PRO" id="PR:Q49AJ0"/>
<dbReference type="Proteomes" id="UP000005640">
    <property type="component" value="Chromosome 8"/>
</dbReference>
<dbReference type="RNAct" id="Q49AJ0">
    <property type="molecule type" value="protein"/>
</dbReference>
<dbReference type="Bgee" id="ENSG00000147724">
    <property type="expression patterns" value="Expressed in left testis and 104 other cell types or tissues"/>
</dbReference>
<dbReference type="ExpressionAtlas" id="Q49AJ0">
    <property type="expression patterns" value="baseline and differential"/>
</dbReference>
<dbReference type="GO" id="GO:0006629">
    <property type="term" value="P:lipid metabolic process"/>
    <property type="evidence" value="ECO:0000318"/>
    <property type="project" value="GO_Central"/>
</dbReference>
<dbReference type="FunFam" id="3.40.50.1820:FF:000004">
    <property type="entry name" value="Protein FAM135A isoform a"/>
    <property type="match status" value="1"/>
</dbReference>
<dbReference type="Gene3D" id="3.40.50.1820">
    <property type="entry name" value="alpha/beta hydrolase"/>
    <property type="match status" value="1"/>
</dbReference>
<dbReference type="InterPro" id="IPR029058">
    <property type="entry name" value="AB_hydrolase_fold"/>
</dbReference>
<dbReference type="InterPro" id="IPR022122">
    <property type="entry name" value="DUF3657"/>
</dbReference>
<dbReference type="InterPro" id="IPR007751">
    <property type="entry name" value="DUF676_lipase-like"/>
</dbReference>
<dbReference type="InterPro" id="IPR044294">
    <property type="entry name" value="Lipase-like"/>
</dbReference>
<dbReference type="PANTHER" id="PTHR12482">
    <property type="entry name" value="LIPASE ROG1-RELATED-RELATED"/>
    <property type="match status" value="1"/>
</dbReference>
<dbReference type="PANTHER" id="PTHR12482:SF3">
    <property type="entry name" value="PROTEIN FAM135B"/>
    <property type="match status" value="1"/>
</dbReference>
<dbReference type="Pfam" id="PF12394">
    <property type="entry name" value="DUF3657"/>
    <property type="match status" value="1"/>
</dbReference>
<dbReference type="Pfam" id="PF05057">
    <property type="entry name" value="DUF676"/>
    <property type="match status" value="1"/>
</dbReference>
<dbReference type="SUPFAM" id="SSF53474">
    <property type="entry name" value="alpha/beta-Hydrolases"/>
    <property type="match status" value="1"/>
</dbReference>
<feature type="chain" id="PRO_0000314171" description="Protein FAM135B">
    <location>
        <begin position="1"/>
        <end position="1406"/>
    </location>
</feature>
<feature type="region of interest" description="Disordered" evidence="2">
    <location>
        <begin position="519"/>
        <end position="548"/>
    </location>
</feature>
<feature type="region of interest" description="Disordered" evidence="2">
    <location>
        <begin position="770"/>
        <end position="820"/>
    </location>
</feature>
<feature type="compositionally biased region" description="Polar residues" evidence="2">
    <location>
        <begin position="804"/>
        <end position="816"/>
    </location>
</feature>
<feature type="modified residue" description="Phosphoserine" evidence="1">
    <location>
        <position position="777"/>
    </location>
</feature>
<feature type="modified residue" description="Phosphoserine" evidence="1">
    <location>
        <position position="778"/>
    </location>
</feature>
<feature type="splice variant" id="VSP_030232" description="In isoform 2." evidence="4">
    <location>
        <begin position="1"/>
        <end position="99"/>
    </location>
</feature>
<feature type="splice variant" id="VSP_030233" description="In isoform 3." evidence="5 6 7">
    <original>SFYQAKEKFKKELKIEGFLYSDLTVLASDIPYFPPEEEEENLEDGIHL</original>
    <variation>RGRGRKFGRWNSPGCLCPWPGWEQCRPPAGKDFHRTGAPWRKTGLPNV</variation>
    <location>
        <begin position="1094"/>
        <end position="1141"/>
    </location>
</feature>
<feature type="splice variant" id="VSP_030234" description="In isoform 3." evidence="5 6 7">
    <location>
        <begin position="1142"/>
        <end position="1406"/>
    </location>
</feature>
<feature type="splice variant" id="VSP_030235" description="In isoform 4." evidence="4">
    <original>S</original>
    <variation>R</variation>
    <location>
        <position position="1213"/>
    </location>
</feature>
<feature type="splice variant" id="VSP_030236" description="In isoform 4." evidence="4">
    <location>
        <begin position="1214"/>
        <end position="1406"/>
    </location>
</feature>
<feature type="sequence variant" id="VAR_053980" description="In dbSNP:rs7835830." evidence="3">
    <original>I</original>
    <variation>V</variation>
    <location>
        <position position="477"/>
    </location>
</feature>
<feature type="sequence variant" id="VAR_062218" description="In dbSNP:rs57534956.">
    <original>S</original>
    <variation>N</variation>
    <location>
        <position position="578"/>
    </location>
</feature>
<feature type="sequence variant" id="VAR_053981" description="In dbSNP:rs2978180.">
    <original>D</original>
    <variation>N</variation>
    <location>
        <position position="846"/>
    </location>
</feature>
<feature type="sequence variant" id="VAR_062219" description="In dbSNP:rs35765793.">
    <original>V</original>
    <variation>I</variation>
    <location>
        <position position="1142"/>
    </location>
</feature>
<feature type="sequence conflict" description="In Ref. 3; AAH37288." evidence="8" ref="3">
    <original>C</original>
    <variation>W</variation>
    <location>
        <position position="245"/>
    </location>
</feature>
<feature type="sequence conflict" description="In Ref. 4; AAD20030." evidence="8" ref="4">
    <original>F</original>
    <variation>V</variation>
    <location>
        <position position="1020"/>
    </location>
</feature>
<sequence length="1406" mass="155770">MSEIQGTVEFSVELHKFYNVDLFQRGYYQIRVTLKVSSRIPHRLSASIAGQTESSSLHSACVHDSTVHSRVFQILYRNEEVPINDAVVFRVHLLLGGERMEDALSEVDFQLKVDLHFTDSEQQLRDVAGAPMVSSRTLGLHFHPRNGLHHQVPVMFDYFHLSVISVTVHAALVALQQPLISFTRPGRGSWLGKGGPDTGQEQSIISLENLVFGAGYCKPTSSEGSFYITSENCMQHAHKWHRDLCLLLLHAYRGLRLHFLVIMRDIPELPHTELEALAVEETLSQLCSELQMLNNPEKIAEQISKDLAWLTSHMMTLWTQFLDTVTLHSQVTTYLTQEHHTLRVRRFSEAFFYMEHQKLAVLTFQENLIQTHSQLSLDIRNSEYLTSMPPLPAECLDIDGDWNTLPVIFEDRYVDCPATGHNLSVYPNFDVPVTSPTIMNLKDKEDNCMVNSNLSFREDLVLSTIKPSQMDSDEEVIRCPEPGENVATQNHMDMCSESQVYISIGEFQNKAGVPEDECWTGQTSDAGTYPVADVDTSRRSPGPEDGQAPVLTYIDVKSSNKNPSRAEPLVAFNAQHESRSSRDKYGLDRTGLSKVVVGGSHQNAISSDKTTLHELSTLGKGIDQEGKMVLLSLKLTPSEPCDPLSSTLREPLDIRSSLKDSHTEEQEELSVLSGVIKRSSSIISDSGIESEPSSVAWSEARSRALELPSDREVLHPFVRRHALHRNSLEGGHTESNTSLPSGIQASLTSISSLPFEEDEREVALTKLTKSVSAPHISSPEEAAEDADTKQQDGGFAEPSDMHSKSQGSPGSCSQLCGDSGTDAGADHPLVEIVLDADNQQGPGYIDIPKGKGKQFDAQGHCLPDGRTENTPGVETKGLNLKIPRVIALENPRTRSLHRALEETPKGMPKDLNVGQQALSNSGISEVEGLSQHQVPELSCTSAADAINRNSTGQQSQSGSPCIMDDTAFNRGVNAFPEAKHKAGTVCPTVTHSVHSQVLKNQELKAGTSIMGSHLTSAETFTLDSLKAVEVVNLSVSCTATCLPFSSVPKETPARAGFSSKQTLFPITHQPLGSFGVVSTHSSTLDEEVSERMFSFYQAKEKFKKELKIEGFLYSDLTVLASDIPYFPPEEEEENLEDGIHLVVCVHGLDGNSADLRLVKTFIELGLPGGKLDFLMSEKNQMDTFADFDTMTDRLLDEIIQHIQLYNLSISRISFIGHSLGNIIIRSVLTRPRFRYYLNKLHTFLSLSGPHLGTLYNNSTLVSTGLWLMQKLKKSGSLLQLTFRDNADLRKCFLYQLSQKTGLQYFKNVVLVASPQDRYVPFHSARIEMCKTALKDRHTGPVYAEMINNLLGPLVEAKDCTLIRHNVFHALPNTANTLIGRAAHIAVLDSELFLEKFFLVAGLNYFK</sequence>
<evidence type="ECO:0000250" key="1">
    <source>
        <dbReference type="UniProtKB" id="Q9DAI6"/>
    </source>
</evidence>
<evidence type="ECO:0000256" key="2">
    <source>
        <dbReference type="SAM" id="MobiDB-lite"/>
    </source>
</evidence>
<evidence type="ECO:0000269" key="3">
    <source>
    </source>
</evidence>
<evidence type="ECO:0000303" key="4">
    <source>
    </source>
</evidence>
<evidence type="ECO:0000303" key="5">
    <source ref="1"/>
</evidence>
<evidence type="ECO:0000303" key="6">
    <source ref="4"/>
</evidence>
<evidence type="ECO:0000303" key="7">
    <source ref="5"/>
</evidence>
<evidence type="ECO:0000305" key="8"/>
<gene>
    <name type="primary">FAM135B</name>
    <name type="synonym">C8orfK32</name>
</gene>
<proteinExistence type="evidence at protein level"/>
<accession>Q49AJ0</accession>
<accession>B5MDB3</accession>
<accession>O95879</accession>
<accession>Q2WGJ7</accession>
<accession>Q3KP46</accession>
<comment type="interaction">
    <interactant intactId="EBI-720896">
        <id>Q49AJ0</id>
    </interactant>
    <interactant intactId="EBI-524753">
        <id>Q8IUH5</id>
        <label>ZDHHC17</label>
    </interactant>
    <organismsDiffer>false</organismsDiffer>
    <experiments>2</experiments>
</comment>
<comment type="interaction">
    <interactant intactId="EBI-25835236">
        <id>Q49AJ0-4</id>
    </interactant>
    <interactant intactId="EBI-10988864">
        <id>P46379-2</id>
        <label>BAG6</label>
    </interactant>
    <organismsDiffer>false</organismsDiffer>
    <experiments>3</experiments>
</comment>
<comment type="interaction">
    <interactant intactId="EBI-25835236">
        <id>Q49AJ0-4</id>
    </interactant>
    <interactant intactId="EBI-718729">
        <id>P55212</id>
        <label>CASP6</label>
    </interactant>
    <organismsDiffer>false</organismsDiffer>
    <experiments>3</experiments>
</comment>
<comment type="interaction">
    <interactant intactId="EBI-25835236">
        <id>Q49AJ0-4</id>
    </interactant>
    <interactant intactId="EBI-395638">
        <id>O14645</id>
        <label>DNALI1</label>
    </interactant>
    <organismsDiffer>false</organismsDiffer>
    <experiments>3</experiments>
</comment>
<comment type="interaction">
    <interactant intactId="EBI-25835236">
        <id>Q49AJ0-4</id>
    </interactant>
    <interactant intactId="EBI-352682">
        <id>P04792</id>
        <label>HSPB1</label>
    </interactant>
    <organismsDiffer>false</organismsDiffer>
    <experiments>3</experiments>
</comment>
<comment type="interaction">
    <interactant intactId="EBI-25835236">
        <id>Q49AJ0-4</id>
    </interactant>
    <interactant intactId="EBI-6398041">
        <id>Q9UMF0</id>
        <label>ICAM5</label>
    </interactant>
    <organismsDiffer>false</organismsDiffer>
    <experiments>3</experiments>
</comment>
<comment type="interaction">
    <interactant intactId="EBI-25835236">
        <id>Q49AJ0-4</id>
    </interactant>
    <interactant intactId="EBI-10975473">
        <id>O60333-2</id>
        <label>KIF1B</label>
    </interactant>
    <organismsDiffer>false</organismsDiffer>
    <experiments>3</experiments>
</comment>
<comment type="interaction">
    <interactant intactId="EBI-25835236">
        <id>Q49AJ0-4</id>
    </interactant>
    <interactant intactId="EBI-948266">
        <id>O14901</id>
        <label>KLF11</label>
    </interactant>
    <organismsDiffer>false</organismsDiffer>
    <experiments>3</experiments>
</comment>
<comment type="interaction">
    <interactant intactId="EBI-25835236">
        <id>Q49AJ0-4</id>
    </interactant>
    <interactant intactId="EBI-21591415">
        <id>P13473-2</id>
        <label>LAMP2</label>
    </interactant>
    <organismsDiffer>false</organismsDiffer>
    <experiments>3</experiments>
</comment>
<comment type="interaction">
    <interactant intactId="EBI-25835236">
        <id>Q49AJ0-4</id>
    </interactant>
    <interactant intactId="EBI-73995">
        <id>P27361</id>
        <label>MAPK3</label>
    </interactant>
    <organismsDiffer>false</organismsDiffer>
    <experiments>3</experiments>
</comment>
<comment type="interaction">
    <interactant intactId="EBI-25835236">
        <id>Q49AJ0-4</id>
    </interactant>
    <interactant intactId="EBI-6190702">
        <id>P28331-2</id>
        <label>NDUFS1</label>
    </interactant>
    <organismsDiffer>false</organismsDiffer>
    <experiments>3</experiments>
</comment>
<comment type="interaction">
    <interactant intactId="EBI-25835236">
        <id>Q49AJ0-4</id>
    </interactant>
    <interactant intactId="EBI-5280197">
        <id>O75400-2</id>
        <label>PRPF40A</label>
    </interactant>
    <organismsDiffer>false</organismsDiffer>
    <experiments>3</experiments>
</comment>
<comment type="interaction">
    <interactant intactId="EBI-25835236">
        <id>Q49AJ0-4</id>
    </interactant>
    <interactant intactId="EBI-286642">
        <id>P62826</id>
        <label>RAN</label>
    </interactant>
    <organismsDiffer>false</organismsDiffer>
    <experiments>3</experiments>
</comment>
<comment type="interaction">
    <interactant intactId="EBI-25835236">
        <id>Q49AJ0-4</id>
    </interactant>
    <interactant intactId="EBI-711909">
        <id>P02766</id>
        <label>TTR</label>
    </interactant>
    <organismsDiffer>false</organismsDiffer>
    <experiments>3</experiments>
</comment>
<comment type="interaction">
    <interactant intactId="EBI-25835236">
        <id>Q49AJ0-4</id>
    </interactant>
    <interactant intactId="EBI-720609">
        <id>O76024</id>
        <label>WFS1</label>
    </interactant>
    <organismsDiffer>false</organismsDiffer>
    <experiments>3</experiments>
</comment>
<comment type="alternative products">
    <event type="alternative splicing"/>
    <isoform>
        <id>Q49AJ0-1</id>
        <name>1</name>
        <sequence type="displayed"/>
    </isoform>
    <isoform>
        <id>Q49AJ0-2</id>
        <name>2</name>
        <sequence type="described" ref="VSP_030232"/>
    </isoform>
    <isoform>
        <id>Q49AJ0-3</id>
        <name>3</name>
        <sequence type="described" ref="VSP_030233 VSP_030234"/>
    </isoform>
    <isoform>
        <id>Q49AJ0-4</id>
        <name>4</name>
        <sequence type="described" ref="VSP_030235 VSP_030236"/>
    </isoform>
</comment>
<comment type="similarity">
    <text evidence="8">Belongs to the FAM135 family.</text>
</comment>
<reference key="1">
    <citation type="submission" date="2004-12" db="EMBL/GenBank/DDBJ databases">
        <title>Novel gene on human chromosome 8.</title>
        <authorList>
            <person name="Shimizu N."/>
            <person name="Asakawa S."/>
            <person name="Shimizu A."/>
            <person name="Yamazaki S."/>
            <person name="Ishikawa S.K."/>
        </authorList>
    </citation>
    <scope>NUCLEOTIDE SEQUENCE [MRNA] (ISOFORM 3)</scope>
    <source>
        <tissue>Brain</tissue>
    </source>
</reference>
<reference key="2">
    <citation type="journal article" date="2006" name="Nature">
        <title>DNA sequence and analysis of human chromosome 8.</title>
        <authorList>
            <person name="Nusbaum C."/>
            <person name="Mikkelsen T.S."/>
            <person name="Zody M.C."/>
            <person name="Asakawa S."/>
            <person name="Taudien S."/>
            <person name="Garber M."/>
            <person name="Kodira C.D."/>
            <person name="Schueler M.G."/>
            <person name="Shimizu A."/>
            <person name="Whittaker C.A."/>
            <person name="Chang J.L."/>
            <person name="Cuomo C.A."/>
            <person name="Dewar K."/>
            <person name="FitzGerald M.G."/>
            <person name="Yang X."/>
            <person name="Allen N.R."/>
            <person name="Anderson S."/>
            <person name="Asakawa T."/>
            <person name="Blechschmidt K."/>
            <person name="Bloom T."/>
            <person name="Borowsky M.L."/>
            <person name="Butler J."/>
            <person name="Cook A."/>
            <person name="Corum B."/>
            <person name="DeArellano K."/>
            <person name="DeCaprio D."/>
            <person name="Dooley K.T."/>
            <person name="Dorris L. III"/>
            <person name="Engels R."/>
            <person name="Gloeckner G."/>
            <person name="Hafez N."/>
            <person name="Hagopian D.S."/>
            <person name="Hall J.L."/>
            <person name="Ishikawa S.K."/>
            <person name="Jaffe D.B."/>
            <person name="Kamat A."/>
            <person name="Kudoh J."/>
            <person name="Lehmann R."/>
            <person name="Lokitsang T."/>
            <person name="Macdonald P."/>
            <person name="Major J.E."/>
            <person name="Matthews C.D."/>
            <person name="Mauceli E."/>
            <person name="Menzel U."/>
            <person name="Mihalev A.H."/>
            <person name="Minoshima S."/>
            <person name="Murayama Y."/>
            <person name="Naylor J.W."/>
            <person name="Nicol R."/>
            <person name="Nguyen C."/>
            <person name="O'Leary S.B."/>
            <person name="O'Neill K."/>
            <person name="Parker S.C.J."/>
            <person name="Polley A."/>
            <person name="Raymond C.K."/>
            <person name="Reichwald K."/>
            <person name="Rodriguez J."/>
            <person name="Sasaki T."/>
            <person name="Schilhabel M."/>
            <person name="Siddiqui R."/>
            <person name="Smith C.L."/>
            <person name="Sneddon T.P."/>
            <person name="Talamas J.A."/>
            <person name="Tenzin P."/>
            <person name="Topham K."/>
            <person name="Venkataraman V."/>
            <person name="Wen G."/>
            <person name="Yamazaki S."/>
            <person name="Young S.K."/>
            <person name="Zeng Q."/>
            <person name="Zimmer A.R."/>
            <person name="Rosenthal A."/>
            <person name="Birren B.W."/>
            <person name="Platzer M."/>
            <person name="Shimizu N."/>
            <person name="Lander E.S."/>
        </authorList>
    </citation>
    <scope>NUCLEOTIDE SEQUENCE [LARGE SCALE GENOMIC DNA]</scope>
</reference>
<reference key="3">
    <citation type="journal article" date="2004" name="Genome Res.">
        <title>The status, quality, and expansion of the NIH full-length cDNA project: the Mammalian Gene Collection (MGC).</title>
        <authorList>
            <consortium name="The MGC Project Team"/>
        </authorList>
    </citation>
    <scope>NUCLEOTIDE SEQUENCE [LARGE SCALE MRNA] (ISOFORM 2)</scope>
    <scope>NUCLEOTIDE SEQUENCE [LARGE SCALE MRNA] OF 756-1406 (ISOFORM 4)</scope>
    <scope>VARIANT VAL-477</scope>
    <source>
        <tissue>Testis</tissue>
    </source>
</reference>
<reference key="4">
    <citation type="submission" date="1999-02" db="EMBL/GenBank/DDBJ databases">
        <authorList>
            <person name="Mei G."/>
            <person name="Yu W."/>
            <person name="Gibbs R.A."/>
        </authorList>
    </citation>
    <scope>NUCLEOTIDE SEQUENCE [LARGE SCALE MRNA] OF 691-1406 (ISOFORM 3)</scope>
    <source>
        <tissue>Brain</tissue>
    </source>
</reference>
<reference key="5">
    <citation type="submission" date="2004-06" db="EMBL/GenBank/DDBJ databases">
        <title>Cloning of human full open reading frames in Gateway(TM) system entry vector (pDONR201).</title>
        <authorList>
            <person name="Ebert L."/>
            <person name="Schick M."/>
            <person name="Neubert P."/>
            <person name="Schatten R."/>
            <person name="Henze S."/>
            <person name="Korn B."/>
        </authorList>
    </citation>
    <scope>NUCLEOTIDE SEQUENCE [LARGE SCALE MRNA] OF 801-1406 (ISOFORM 3)</scope>
</reference>
<organism>
    <name type="scientific">Homo sapiens</name>
    <name type="common">Human</name>
    <dbReference type="NCBI Taxonomy" id="9606"/>
    <lineage>
        <taxon>Eukaryota</taxon>
        <taxon>Metazoa</taxon>
        <taxon>Chordata</taxon>
        <taxon>Craniata</taxon>
        <taxon>Vertebrata</taxon>
        <taxon>Euteleostomi</taxon>
        <taxon>Mammalia</taxon>
        <taxon>Eutheria</taxon>
        <taxon>Euarchontoglires</taxon>
        <taxon>Primates</taxon>
        <taxon>Haplorrhini</taxon>
        <taxon>Catarrhini</taxon>
        <taxon>Hominidae</taxon>
        <taxon>Homo</taxon>
    </lineage>
</organism>
<keyword id="KW-0025">Alternative splicing</keyword>
<keyword id="KW-0597">Phosphoprotein</keyword>
<keyword id="KW-1267">Proteomics identification</keyword>
<keyword id="KW-1185">Reference proteome</keyword>
<name>F135B_HUMAN</name>